<gene>
    <name evidence="1" type="primary">psbT</name>
</gene>
<comment type="function">
    <text evidence="1">Found at the monomer-monomer interface of the photosystem II (PS II) dimer, plays a role in assembly and dimerization of PSII. PSII is a light-driven water plastoquinone oxidoreductase, using light energy to abstract electrons from H(2)O, generating a proton gradient subsequently used for ATP formation.</text>
</comment>
<comment type="subunit">
    <text evidence="1">PSII is composed of 1 copy each of membrane proteins PsbA, PsbB, PsbC, PsbD, PsbE, PsbF, PsbH, PsbI, PsbJ, PsbK, PsbL, PsbM, PsbT, PsbX, PsbY, PsbZ, Psb30/Ycf12, at least 3 peripheral proteins of the oxygen-evolving complex and a large number of cofactors. It forms dimeric complexes.</text>
</comment>
<comment type="subcellular location">
    <subcellularLocation>
        <location evidence="1">Plastid</location>
        <location evidence="1">Chloroplast thylakoid membrane</location>
        <topology evidence="1">Single-pass membrane protein</topology>
    </subcellularLocation>
</comment>
<comment type="similarity">
    <text evidence="1">Belongs to the PsbT family.</text>
</comment>
<feature type="chain" id="PRO_0000217935" description="Photosystem II reaction center protein T">
    <location>
        <begin position="1"/>
        <end position="32"/>
    </location>
</feature>
<feature type="transmembrane region" description="Helical" evidence="1">
    <location>
        <begin position="3"/>
        <end position="23"/>
    </location>
</feature>
<protein>
    <recommendedName>
        <fullName evidence="1">Photosystem II reaction center protein T</fullName>
        <shortName evidence="1">PSII-T</shortName>
    </recommendedName>
</protein>
<name>PSBT_GUITH</name>
<organism>
    <name type="scientific">Guillardia theta</name>
    <name type="common">Cryptophyte</name>
    <name type="synonym">Cryptomonas phi</name>
    <dbReference type="NCBI Taxonomy" id="55529"/>
    <lineage>
        <taxon>Eukaryota</taxon>
        <taxon>Cryptophyceae</taxon>
        <taxon>Pyrenomonadales</taxon>
        <taxon>Geminigeraceae</taxon>
        <taxon>Guillardia</taxon>
    </lineage>
</organism>
<reference key="1">
    <citation type="journal article" date="1999" name="J. Mol. Evol.">
        <title>The plastid genome of the cryptophyte alga, Guillardia theta: complete sequence and conserved synteny groups confirm its common ancestry with red algae.</title>
        <authorList>
            <person name="Douglas S.E."/>
            <person name="Penny S.L."/>
        </authorList>
    </citation>
    <scope>NUCLEOTIDE SEQUENCE [LARGE SCALE GENOMIC DNA]</scope>
</reference>
<evidence type="ECO:0000255" key="1">
    <source>
        <dbReference type="HAMAP-Rule" id="MF_00808"/>
    </source>
</evidence>
<dbReference type="EMBL" id="AF041468">
    <property type="protein sequence ID" value="AAC35734.1"/>
    <property type="molecule type" value="Genomic_DNA"/>
</dbReference>
<dbReference type="RefSeq" id="NP_050800.1">
    <property type="nucleotide sequence ID" value="NC_000926.1"/>
</dbReference>
<dbReference type="SMR" id="O78512"/>
<dbReference type="GeneID" id="857108"/>
<dbReference type="HOGENOM" id="CLU_217078_0_0_1"/>
<dbReference type="GO" id="GO:0009535">
    <property type="term" value="C:chloroplast thylakoid membrane"/>
    <property type="evidence" value="ECO:0007669"/>
    <property type="project" value="UniProtKB-SubCell"/>
</dbReference>
<dbReference type="GO" id="GO:0009539">
    <property type="term" value="C:photosystem II reaction center"/>
    <property type="evidence" value="ECO:0007669"/>
    <property type="project" value="InterPro"/>
</dbReference>
<dbReference type="GO" id="GO:0015979">
    <property type="term" value="P:photosynthesis"/>
    <property type="evidence" value="ECO:0007669"/>
    <property type="project" value="UniProtKB-UniRule"/>
</dbReference>
<dbReference type="HAMAP" id="MF_00808">
    <property type="entry name" value="PSII_PsbT"/>
    <property type="match status" value="1"/>
</dbReference>
<dbReference type="InterPro" id="IPR001743">
    <property type="entry name" value="PSII_PsbT"/>
</dbReference>
<dbReference type="InterPro" id="IPR037268">
    <property type="entry name" value="PSII_PsbT_sf"/>
</dbReference>
<dbReference type="PANTHER" id="PTHR36411">
    <property type="match status" value="1"/>
</dbReference>
<dbReference type="PANTHER" id="PTHR36411:SF2">
    <property type="entry name" value="PHOTOSYSTEM II REACTION CENTER PROTEIN T"/>
    <property type="match status" value="1"/>
</dbReference>
<dbReference type="Pfam" id="PF01405">
    <property type="entry name" value="PsbT"/>
    <property type="match status" value="1"/>
</dbReference>
<dbReference type="SUPFAM" id="SSF161029">
    <property type="entry name" value="Photosystem II reaction center protein T, PsbT"/>
    <property type="match status" value="1"/>
</dbReference>
<proteinExistence type="inferred from homology"/>
<sequence length="32" mass="3642">METLVYTFLLIGTLAVLFAAVFFRDPPRIAKK</sequence>
<accession>O78512</accession>
<keyword id="KW-0150">Chloroplast</keyword>
<keyword id="KW-0472">Membrane</keyword>
<keyword id="KW-0602">Photosynthesis</keyword>
<keyword id="KW-0604">Photosystem II</keyword>
<keyword id="KW-0934">Plastid</keyword>
<keyword id="KW-0793">Thylakoid</keyword>
<keyword id="KW-0812">Transmembrane</keyword>
<keyword id="KW-1133">Transmembrane helix</keyword>
<geneLocation type="chloroplast"/>